<feature type="chain" id="PRO_1000069767" description="7-cyano-7-deazaguanine synthase">
    <location>
        <begin position="1"/>
        <end position="231"/>
    </location>
</feature>
<feature type="binding site" evidence="1">
    <location>
        <begin position="8"/>
        <end position="18"/>
    </location>
    <ligand>
        <name>ATP</name>
        <dbReference type="ChEBI" id="CHEBI:30616"/>
    </ligand>
</feature>
<feature type="binding site" evidence="1">
    <location>
        <position position="188"/>
    </location>
    <ligand>
        <name>Zn(2+)</name>
        <dbReference type="ChEBI" id="CHEBI:29105"/>
    </ligand>
</feature>
<feature type="binding site" evidence="1">
    <location>
        <position position="197"/>
    </location>
    <ligand>
        <name>Zn(2+)</name>
        <dbReference type="ChEBI" id="CHEBI:29105"/>
    </ligand>
</feature>
<feature type="binding site" evidence="1">
    <location>
        <position position="200"/>
    </location>
    <ligand>
        <name>Zn(2+)</name>
        <dbReference type="ChEBI" id="CHEBI:29105"/>
    </ligand>
</feature>
<feature type="binding site" evidence="1">
    <location>
        <position position="203"/>
    </location>
    <ligand>
        <name>Zn(2+)</name>
        <dbReference type="ChEBI" id="CHEBI:29105"/>
    </ligand>
</feature>
<organism>
    <name type="scientific">Escherichia coli O9:H4 (strain HS)</name>
    <dbReference type="NCBI Taxonomy" id="331112"/>
    <lineage>
        <taxon>Bacteria</taxon>
        <taxon>Pseudomonadati</taxon>
        <taxon>Pseudomonadota</taxon>
        <taxon>Gammaproteobacteria</taxon>
        <taxon>Enterobacterales</taxon>
        <taxon>Enterobacteriaceae</taxon>
        <taxon>Escherichia</taxon>
    </lineage>
</organism>
<dbReference type="EC" id="6.3.4.20" evidence="1"/>
<dbReference type="EMBL" id="CP000802">
    <property type="protein sequence ID" value="ABV04906.1"/>
    <property type="molecule type" value="Genomic_DNA"/>
</dbReference>
<dbReference type="RefSeq" id="WP_000817229.1">
    <property type="nucleotide sequence ID" value="NC_009800.1"/>
</dbReference>
<dbReference type="SMR" id="A7ZXA2"/>
<dbReference type="GeneID" id="93777006"/>
<dbReference type="KEGG" id="ecx:EcHS_A0521"/>
<dbReference type="HOGENOM" id="CLU_081854_0_0_6"/>
<dbReference type="UniPathway" id="UPA00391"/>
<dbReference type="GO" id="GO:0005524">
    <property type="term" value="F:ATP binding"/>
    <property type="evidence" value="ECO:0007669"/>
    <property type="project" value="UniProtKB-UniRule"/>
</dbReference>
<dbReference type="GO" id="GO:0016879">
    <property type="term" value="F:ligase activity, forming carbon-nitrogen bonds"/>
    <property type="evidence" value="ECO:0007669"/>
    <property type="project" value="UniProtKB-UniRule"/>
</dbReference>
<dbReference type="GO" id="GO:0008270">
    <property type="term" value="F:zinc ion binding"/>
    <property type="evidence" value="ECO:0007669"/>
    <property type="project" value="UniProtKB-UniRule"/>
</dbReference>
<dbReference type="GO" id="GO:0008616">
    <property type="term" value="P:queuosine biosynthetic process"/>
    <property type="evidence" value="ECO:0007669"/>
    <property type="project" value="UniProtKB-UniRule"/>
</dbReference>
<dbReference type="CDD" id="cd01995">
    <property type="entry name" value="QueC-like"/>
    <property type="match status" value="1"/>
</dbReference>
<dbReference type="FunFam" id="3.40.50.620:FF:000017">
    <property type="entry name" value="7-cyano-7-deazaguanine synthase"/>
    <property type="match status" value="1"/>
</dbReference>
<dbReference type="Gene3D" id="3.40.50.620">
    <property type="entry name" value="HUPs"/>
    <property type="match status" value="1"/>
</dbReference>
<dbReference type="HAMAP" id="MF_01633">
    <property type="entry name" value="QueC"/>
    <property type="match status" value="1"/>
</dbReference>
<dbReference type="InterPro" id="IPR018317">
    <property type="entry name" value="QueC"/>
</dbReference>
<dbReference type="InterPro" id="IPR014729">
    <property type="entry name" value="Rossmann-like_a/b/a_fold"/>
</dbReference>
<dbReference type="NCBIfam" id="TIGR00364">
    <property type="entry name" value="7-cyano-7-deazaguanine synthase QueC"/>
    <property type="match status" value="1"/>
</dbReference>
<dbReference type="NCBIfam" id="NF008317">
    <property type="entry name" value="PRK11106.1"/>
    <property type="match status" value="1"/>
</dbReference>
<dbReference type="PANTHER" id="PTHR42914">
    <property type="entry name" value="7-CYANO-7-DEAZAGUANINE SYNTHASE"/>
    <property type="match status" value="1"/>
</dbReference>
<dbReference type="PANTHER" id="PTHR42914:SF1">
    <property type="entry name" value="7-CYANO-7-DEAZAGUANINE SYNTHASE"/>
    <property type="match status" value="1"/>
</dbReference>
<dbReference type="Pfam" id="PF06508">
    <property type="entry name" value="QueC"/>
    <property type="match status" value="1"/>
</dbReference>
<dbReference type="PIRSF" id="PIRSF006293">
    <property type="entry name" value="ExsB"/>
    <property type="match status" value="1"/>
</dbReference>
<dbReference type="SUPFAM" id="SSF52402">
    <property type="entry name" value="Adenine nucleotide alpha hydrolases-like"/>
    <property type="match status" value="1"/>
</dbReference>
<keyword id="KW-0067">ATP-binding</keyword>
<keyword id="KW-0436">Ligase</keyword>
<keyword id="KW-0479">Metal-binding</keyword>
<keyword id="KW-0547">Nucleotide-binding</keyword>
<keyword id="KW-0671">Queuosine biosynthesis</keyword>
<keyword id="KW-0862">Zinc</keyword>
<evidence type="ECO:0000255" key="1">
    <source>
        <dbReference type="HAMAP-Rule" id="MF_01633"/>
    </source>
</evidence>
<comment type="function">
    <text evidence="1">Catalyzes the ATP-dependent conversion of 7-carboxy-7-deazaguanine (CDG) to 7-cyano-7-deazaguanine (preQ(0)).</text>
</comment>
<comment type="catalytic activity">
    <reaction evidence="1">
        <text>7-carboxy-7-deazaguanine + NH4(+) + ATP = 7-cyano-7-deazaguanine + ADP + phosphate + H2O + H(+)</text>
        <dbReference type="Rhea" id="RHEA:27982"/>
        <dbReference type="ChEBI" id="CHEBI:15377"/>
        <dbReference type="ChEBI" id="CHEBI:15378"/>
        <dbReference type="ChEBI" id="CHEBI:28938"/>
        <dbReference type="ChEBI" id="CHEBI:30616"/>
        <dbReference type="ChEBI" id="CHEBI:43474"/>
        <dbReference type="ChEBI" id="CHEBI:45075"/>
        <dbReference type="ChEBI" id="CHEBI:61036"/>
        <dbReference type="ChEBI" id="CHEBI:456216"/>
        <dbReference type="EC" id="6.3.4.20"/>
    </reaction>
</comment>
<comment type="cofactor">
    <cofactor evidence="1">
        <name>Zn(2+)</name>
        <dbReference type="ChEBI" id="CHEBI:29105"/>
    </cofactor>
    <text evidence="1">Binds 1 zinc ion per subunit.</text>
</comment>
<comment type="pathway">
    <text evidence="1">Purine metabolism; 7-cyano-7-deazaguanine biosynthesis.</text>
</comment>
<comment type="similarity">
    <text evidence="1">Belongs to the QueC family.</text>
</comment>
<name>QUEC_ECOHS</name>
<sequence>MKRAVVVFSGGQDSTTCLVQALQQYDEVHCVTFDYGQRHRAEIDVARELALKLGARAHKVLDVTLLNELAVSSLTRDSIPVPDYEPEADGIPNTFVPGRNILFLTLAAIYAYQVKAEAVITGVCETDFSGYPDCRDEFVKALNHAVSLGMAKDIRFETPLMWIDKAETWALADYYGKLDLVRNETLTCYNGIKGDGCGHCAACNLRANGLNHYLADKPTVMAAMKQKTGLR</sequence>
<gene>
    <name evidence="1" type="primary">queC</name>
    <name type="ordered locus">EcHS_A0521</name>
</gene>
<protein>
    <recommendedName>
        <fullName evidence="1">7-cyano-7-deazaguanine synthase</fullName>
        <ecNumber evidence="1">6.3.4.20</ecNumber>
    </recommendedName>
    <alternativeName>
        <fullName evidence="1">7-cyano-7-carbaguanine synthase</fullName>
    </alternativeName>
    <alternativeName>
        <fullName evidence="1">PreQ(0) synthase</fullName>
    </alternativeName>
    <alternativeName>
        <fullName evidence="1">Queuosine biosynthesis protein QueC</fullName>
    </alternativeName>
</protein>
<accession>A7ZXA2</accession>
<reference key="1">
    <citation type="journal article" date="2008" name="J. Bacteriol.">
        <title>The pangenome structure of Escherichia coli: comparative genomic analysis of E. coli commensal and pathogenic isolates.</title>
        <authorList>
            <person name="Rasko D.A."/>
            <person name="Rosovitz M.J."/>
            <person name="Myers G.S.A."/>
            <person name="Mongodin E.F."/>
            <person name="Fricke W.F."/>
            <person name="Gajer P."/>
            <person name="Crabtree J."/>
            <person name="Sebaihia M."/>
            <person name="Thomson N.R."/>
            <person name="Chaudhuri R."/>
            <person name="Henderson I.R."/>
            <person name="Sperandio V."/>
            <person name="Ravel J."/>
        </authorList>
    </citation>
    <scope>NUCLEOTIDE SEQUENCE [LARGE SCALE GENOMIC DNA]</scope>
    <source>
        <strain>HS</strain>
    </source>
</reference>
<proteinExistence type="inferred from homology"/>